<organism>
    <name type="scientific">Clostridium botulinum (strain Langeland / NCTC 10281 / Type F)</name>
    <dbReference type="NCBI Taxonomy" id="441772"/>
    <lineage>
        <taxon>Bacteria</taxon>
        <taxon>Bacillati</taxon>
        <taxon>Bacillota</taxon>
        <taxon>Clostridia</taxon>
        <taxon>Eubacteriales</taxon>
        <taxon>Clostridiaceae</taxon>
        <taxon>Clostridium</taxon>
    </lineage>
</organism>
<reference key="1">
    <citation type="submission" date="2007-06" db="EMBL/GenBank/DDBJ databases">
        <authorList>
            <person name="Brinkac L.M."/>
            <person name="Daugherty S."/>
            <person name="Dodson R.J."/>
            <person name="Madupu R."/>
            <person name="Brown J.L."/>
            <person name="Bruce D."/>
            <person name="Detter C."/>
            <person name="Munk C."/>
            <person name="Smith L.A."/>
            <person name="Smith T.J."/>
            <person name="White O."/>
            <person name="Brettin T.S."/>
        </authorList>
    </citation>
    <scope>NUCLEOTIDE SEQUENCE [LARGE SCALE GENOMIC DNA]</scope>
    <source>
        <strain>Langeland / NCTC 10281 / Type F</strain>
    </source>
</reference>
<keyword id="KW-0378">Hydrolase</keyword>
<keyword id="KW-0479">Metal-binding</keyword>
<keyword id="KW-0862">Zinc</keyword>
<gene>
    <name type="ordered locus">CLI_3563</name>
</gene>
<feature type="chain" id="PRO_1000069014" description="Probable phosphatase CLI_3563">
    <location>
        <begin position="1"/>
        <end position="243"/>
    </location>
</feature>
<feature type="binding site" evidence="1">
    <location>
        <position position="8"/>
    </location>
    <ligand>
        <name>Zn(2+)</name>
        <dbReference type="ChEBI" id="CHEBI:29105"/>
        <label>1</label>
    </ligand>
</feature>
<feature type="binding site" evidence="1">
    <location>
        <position position="10"/>
    </location>
    <ligand>
        <name>Zn(2+)</name>
        <dbReference type="ChEBI" id="CHEBI:29105"/>
        <label>1</label>
    </ligand>
</feature>
<feature type="binding site" evidence="1">
    <location>
        <position position="16"/>
    </location>
    <ligand>
        <name>Zn(2+)</name>
        <dbReference type="ChEBI" id="CHEBI:29105"/>
        <label>2</label>
    </ligand>
</feature>
<feature type="binding site" evidence="1">
    <location>
        <position position="41"/>
    </location>
    <ligand>
        <name>Zn(2+)</name>
        <dbReference type="ChEBI" id="CHEBI:29105"/>
        <label>2</label>
    </ligand>
</feature>
<feature type="binding site" evidence="1">
    <location>
        <position position="74"/>
    </location>
    <ligand>
        <name>Zn(2+)</name>
        <dbReference type="ChEBI" id="CHEBI:29105"/>
        <label>1</label>
    </ligand>
</feature>
<feature type="binding site" evidence="1">
    <location>
        <position position="74"/>
    </location>
    <ligand>
        <name>Zn(2+)</name>
        <dbReference type="ChEBI" id="CHEBI:29105"/>
        <label>3</label>
    </ligand>
</feature>
<feature type="binding site" evidence="1">
    <location>
        <position position="102"/>
    </location>
    <ligand>
        <name>Zn(2+)</name>
        <dbReference type="ChEBI" id="CHEBI:29105"/>
        <label>3</label>
    </ligand>
</feature>
<feature type="binding site" evidence="1">
    <location>
        <position position="132"/>
    </location>
    <ligand>
        <name>Zn(2+)</name>
        <dbReference type="ChEBI" id="CHEBI:29105"/>
        <label>3</label>
    </ligand>
</feature>
<feature type="binding site" evidence="1">
    <location>
        <position position="192"/>
    </location>
    <ligand>
        <name>Zn(2+)</name>
        <dbReference type="ChEBI" id="CHEBI:29105"/>
        <label>1</label>
    </ligand>
</feature>
<feature type="binding site" evidence="1">
    <location>
        <position position="194"/>
    </location>
    <ligand>
        <name>Zn(2+)</name>
        <dbReference type="ChEBI" id="CHEBI:29105"/>
        <label>2</label>
    </ligand>
</feature>
<proteinExistence type="inferred from homology"/>
<evidence type="ECO:0000255" key="1">
    <source>
        <dbReference type="HAMAP-Rule" id="MF_01561"/>
    </source>
</evidence>
<comment type="cofactor">
    <cofactor evidence="1">
        <name>Zn(2+)</name>
        <dbReference type="ChEBI" id="CHEBI:29105"/>
    </cofactor>
    <text evidence="1">Binds 3 Zn(2+) ions per subunit.</text>
</comment>
<comment type="similarity">
    <text evidence="1">Belongs to the PHP family.</text>
</comment>
<name>Y3563_CLOBL</name>
<sequence length="243" mass="27174">MRYLVDTHTHTIVSGHAYTTFLENVQEASNIGLKVLGTTDHGPSMPGGPNLFYFNNFKVMPRKLKGVTLLHGCEANIIDFKGMLDIPDFTQKKLDVIIASLHDVCIRPGSMEENTEALINVMENPYVDILGHIGNPSFPINEEVVVKKAKEKNVLIEINNGSFVSRKGSEETCKKVANLCKKHKVNIIVGSDSHVCFQIGRFPKADNMLKEIGMPEELIINNEENKILEYLKNKGKLKDLNLD</sequence>
<accession>A7GIX5</accession>
<protein>
    <recommendedName>
        <fullName evidence="1">Probable phosphatase CLI_3563</fullName>
        <ecNumber evidence="1">3.1.3.-</ecNumber>
    </recommendedName>
</protein>
<dbReference type="EC" id="3.1.3.-" evidence="1"/>
<dbReference type="EMBL" id="CP000728">
    <property type="protein sequence ID" value="ABS42141.1"/>
    <property type="molecule type" value="Genomic_DNA"/>
</dbReference>
<dbReference type="RefSeq" id="WP_012101081.1">
    <property type="nucleotide sequence ID" value="NC_009699.1"/>
</dbReference>
<dbReference type="SMR" id="A7GIX5"/>
<dbReference type="KEGG" id="cbf:CLI_3563"/>
<dbReference type="HOGENOM" id="CLU_061999_0_1_9"/>
<dbReference type="Proteomes" id="UP000002410">
    <property type="component" value="Chromosome"/>
</dbReference>
<dbReference type="GO" id="GO:0005829">
    <property type="term" value="C:cytosol"/>
    <property type="evidence" value="ECO:0007669"/>
    <property type="project" value="TreeGrafter"/>
</dbReference>
<dbReference type="GO" id="GO:0016791">
    <property type="term" value="F:phosphatase activity"/>
    <property type="evidence" value="ECO:0007669"/>
    <property type="project" value="UniProtKB-UniRule"/>
</dbReference>
<dbReference type="GO" id="GO:0008270">
    <property type="term" value="F:zinc ion binding"/>
    <property type="evidence" value="ECO:0007669"/>
    <property type="project" value="UniProtKB-UniRule"/>
</dbReference>
<dbReference type="CDD" id="cd07437">
    <property type="entry name" value="PHP_HisPPase_Ycdx_like"/>
    <property type="match status" value="1"/>
</dbReference>
<dbReference type="Gene3D" id="3.20.20.140">
    <property type="entry name" value="Metal-dependent hydrolases"/>
    <property type="match status" value="1"/>
</dbReference>
<dbReference type="HAMAP" id="MF_01561">
    <property type="entry name" value="YcdX_phosphat"/>
    <property type="match status" value="1"/>
</dbReference>
<dbReference type="InterPro" id="IPR023710">
    <property type="entry name" value="Phosphatase_YcdX_put"/>
</dbReference>
<dbReference type="InterPro" id="IPR004013">
    <property type="entry name" value="PHP_dom"/>
</dbReference>
<dbReference type="InterPro" id="IPR050243">
    <property type="entry name" value="PHP_phosphatase"/>
</dbReference>
<dbReference type="InterPro" id="IPR003141">
    <property type="entry name" value="Pol/His_phosphatase_N"/>
</dbReference>
<dbReference type="InterPro" id="IPR016195">
    <property type="entry name" value="Pol/histidinol_Pase-like"/>
</dbReference>
<dbReference type="NCBIfam" id="NF006702">
    <property type="entry name" value="PRK09248.1"/>
    <property type="match status" value="1"/>
</dbReference>
<dbReference type="PANTHER" id="PTHR36928">
    <property type="entry name" value="PHOSPHATASE YCDX-RELATED"/>
    <property type="match status" value="1"/>
</dbReference>
<dbReference type="PANTHER" id="PTHR36928:SF1">
    <property type="entry name" value="PHOSPHATASE YCDX-RELATED"/>
    <property type="match status" value="1"/>
</dbReference>
<dbReference type="Pfam" id="PF02811">
    <property type="entry name" value="PHP"/>
    <property type="match status" value="1"/>
</dbReference>
<dbReference type="SMART" id="SM00481">
    <property type="entry name" value="POLIIIAc"/>
    <property type="match status" value="1"/>
</dbReference>
<dbReference type="SUPFAM" id="SSF89550">
    <property type="entry name" value="PHP domain-like"/>
    <property type="match status" value="1"/>
</dbReference>